<keyword id="KW-0963">Cytoplasm</keyword>
<keyword id="KW-0238">DNA-binding</keyword>
<keyword id="KW-0677">Repeat</keyword>
<keyword id="KW-0804">Transcription</keyword>
<keyword id="KW-0805">Transcription regulation</keyword>
<gene>
    <name evidence="1" type="primary">mraZ</name>
    <name type="ordered locus">Reut_A2988</name>
</gene>
<reference key="1">
    <citation type="journal article" date="2010" name="PLoS ONE">
        <title>The complete multipartite genome sequence of Cupriavidus necator JMP134, a versatile pollutant degrader.</title>
        <authorList>
            <person name="Lykidis A."/>
            <person name="Perez-Pantoja D."/>
            <person name="Ledger T."/>
            <person name="Mavromatis K."/>
            <person name="Anderson I.J."/>
            <person name="Ivanova N.N."/>
            <person name="Hooper S.D."/>
            <person name="Lapidus A."/>
            <person name="Lucas S."/>
            <person name="Gonzalez B."/>
            <person name="Kyrpides N.C."/>
        </authorList>
    </citation>
    <scope>NUCLEOTIDE SEQUENCE [LARGE SCALE GENOMIC DNA]</scope>
    <source>
        <strain>JMP134 / LMG 1197</strain>
    </source>
</reference>
<organism>
    <name type="scientific">Cupriavidus pinatubonensis (strain JMP 134 / LMG 1197)</name>
    <name type="common">Cupriavidus necator (strain JMP 134)</name>
    <dbReference type="NCBI Taxonomy" id="264198"/>
    <lineage>
        <taxon>Bacteria</taxon>
        <taxon>Pseudomonadati</taxon>
        <taxon>Pseudomonadota</taxon>
        <taxon>Betaproteobacteria</taxon>
        <taxon>Burkholderiales</taxon>
        <taxon>Burkholderiaceae</taxon>
        <taxon>Cupriavidus</taxon>
    </lineage>
</organism>
<accession>Q46WY5</accession>
<protein>
    <recommendedName>
        <fullName>Transcriptional regulator MraZ</fullName>
    </recommendedName>
</protein>
<sequence>MFQGASALSLDAKGRMSIPSRHREALQQQAEGRVTLTKHPDGCLLLFPRPEWESFRQRIAALPMDAHWWKRIFLGNAADVEMDGAGRVLIAPELRGAAMLDKEVMLLGMGSHFEVWDAATYAAKEQQAMAQGMPEALKNFSF</sequence>
<feature type="chain" id="PRO_0000230104" description="Transcriptional regulator MraZ">
    <location>
        <begin position="1"/>
        <end position="142"/>
    </location>
</feature>
<feature type="domain" description="SpoVT-AbrB 1" evidence="2">
    <location>
        <begin position="5"/>
        <end position="51"/>
    </location>
</feature>
<feature type="domain" description="SpoVT-AbrB 2" evidence="2">
    <location>
        <begin position="77"/>
        <end position="120"/>
    </location>
</feature>
<comment type="subunit">
    <text evidence="1">Forms oligomers.</text>
</comment>
<comment type="subcellular location">
    <subcellularLocation>
        <location evidence="1">Cytoplasm</location>
        <location evidence="1">Nucleoid</location>
    </subcellularLocation>
</comment>
<comment type="similarity">
    <text evidence="1">Belongs to the MraZ family.</text>
</comment>
<evidence type="ECO:0000255" key="1">
    <source>
        <dbReference type="HAMAP-Rule" id="MF_01008"/>
    </source>
</evidence>
<evidence type="ECO:0000255" key="2">
    <source>
        <dbReference type="PROSITE-ProRule" id="PRU01076"/>
    </source>
</evidence>
<name>MRAZ_CUPPJ</name>
<proteinExistence type="inferred from homology"/>
<dbReference type="EMBL" id="CP000090">
    <property type="protein sequence ID" value="AAZ62348.1"/>
    <property type="molecule type" value="Genomic_DNA"/>
</dbReference>
<dbReference type="SMR" id="Q46WY5"/>
<dbReference type="STRING" id="264198.Reut_A2988"/>
<dbReference type="KEGG" id="reu:Reut_A2988"/>
<dbReference type="eggNOG" id="COG2001">
    <property type="taxonomic scope" value="Bacteria"/>
</dbReference>
<dbReference type="HOGENOM" id="CLU_107907_2_1_4"/>
<dbReference type="OrthoDB" id="9807753at2"/>
<dbReference type="GO" id="GO:0005737">
    <property type="term" value="C:cytoplasm"/>
    <property type="evidence" value="ECO:0007669"/>
    <property type="project" value="UniProtKB-UniRule"/>
</dbReference>
<dbReference type="GO" id="GO:0009295">
    <property type="term" value="C:nucleoid"/>
    <property type="evidence" value="ECO:0007669"/>
    <property type="project" value="UniProtKB-SubCell"/>
</dbReference>
<dbReference type="GO" id="GO:0003700">
    <property type="term" value="F:DNA-binding transcription factor activity"/>
    <property type="evidence" value="ECO:0007669"/>
    <property type="project" value="UniProtKB-UniRule"/>
</dbReference>
<dbReference type="GO" id="GO:0000976">
    <property type="term" value="F:transcription cis-regulatory region binding"/>
    <property type="evidence" value="ECO:0007669"/>
    <property type="project" value="TreeGrafter"/>
</dbReference>
<dbReference type="GO" id="GO:2000143">
    <property type="term" value="P:negative regulation of DNA-templated transcription initiation"/>
    <property type="evidence" value="ECO:0007669"/>
    <property type="project" value="TreeGrafter"/>
</dbReference>
<dbReference type="CDD" id="cd16321">
    <property type="entry name" value="MraZ_C"/>
    <property type="match status" value="1"/>
</dbReference>
<dbReference type="CDD" id="cd16320">
    <property type="entry name" value="MraZ_N"/>
    <property type="match status" value="1"/>
</dbReference>
<dbReference type="Gene3D" id="3.40.1550.20">
    <property type="entry name" value="Transcriptional regulator MraZ domain"/>
    <property type="match status" value="1"/>
</dbReference>
<dbReference type="HAMAP" id="MF_01008">
    <property type="entry name" value="MraZ"/>
    <property type="match status" value="1"/>
</dbReference>
<dbReference type="InterPro" id="IPR003444">
    <property type="entry name" value="MraZ"/>
</dbReference>
<dbReference type="InterPro" id="IPR035644">
    <property type="entry name" value="MraZ_C"/>
</dbReference>
<dbReference type="InterPro" id="IPR020603">
    <property type="entry name" value="MraZ_dom"/>
</dbReference>
<dbReference type="InterPro" id="IPR035642">
    <property type="entry name" value="MraZ_N"/>
</dbReference>
<dbReference type="InterPro" id="IPR038619">
    <property type="entry name" value="MraZ_sf"/>
</dbReference>
<dbReference type="InterPro" id="IPR007159">
    <property type="entry name" value="SpoVT-AbrB_dom"/>
</dbReference>
<dbReference type="InterPro" id="IPR037914">
    <property type="entry name" value="SpoVT-AbrB_sf"/>
</dbReference>
<dbReference type="NCBIfam" id="TIGR00242">
    <property type="entry name" value="division/cell wall cluster transcriptional repressor MraZ"/>
    <property type="match status" value="1"/>
</dbReference>
<dbReference type="PANTHER" id="PTHR34701">
    <property type="entry name" value="TRANSCRIPTIONAL REGULATOR MRAZ"/>
    <property type="match status" value="1"/>
</dbReference>
<dbReference type="PANTHER" id="PTHR34701:SF1">
    <property type="entry name" value="TRANSCRIPTIONAL REGULATOR MRAZ"/>
    <property type="match status" value="1"/>
</dbReference>
<dbReference type="Pfam" id="PF02381">
    <property type="entry name" value="MraZ"/>
    <property type="match status" value="2"/>
</dbReference>
<dbReference type="SUPFAM" id="SSF89447">
    <property type="entry name" value="AbrB/MazE/MraZ-like"/>
    <property type="match status" value="1"/>
</dbReference>
<dbReference type="PROSITE" id="PS51740">
    <property type="entry name" value="SPOVT_ABRB"/>
    <property type="match status" value="2"/>
</dbReference>